<proteinExistence type="inferred from homology"/>
<name>SURE_RHIWR</name>
<comment type="function">
    <text evidence="1">Nucleotidase that shows phosphatase activity on nucleoside 5'-monophosphates.</text>
</comment>
<comment type="catalytic activity">
    <reaction evidence="1">
        <text>a ribonucleoside 5'-phosphate + H2O = a ribonucleoside + phosphate</text>
        <dbReference type="Rhea" id="RHEA:12484"/>
        <dbReference type="ChEBI" id="CHEBI:15377"/>
        <dbReference type="ChEBI" id="CHEBI:18254"/>
        <dbReference type="ChEBI" id="CHEBI:43474"/>
        <dbReference type="ChEBI" id="CHEBI:58043"/>
        <dbReference type="EC" id="3.1.3.5"/>
    </reaction>
</comment>
<comment type="cofactor">
    <cofactor evidence="1">
        <name>a divalent metal cation</name>
        <dbReference type="ChEBI" id="CHEBI:60240"/>
    </cofactor>
    <text evidence="1">Binds 1 divalent metal cation per subunit.</text>
</comment>
<comment type="subcellular location">
    <subcellularLocation>
        <location evidence="1">Cytoplasm</location>
    </subcellularLocation>
</comment>
<comment type="similarity">
    <text evidence="1">Belongs to the SurE nucleotidase family.</text>
</comment>
<reference key="1">
    <citation type="journal article" date="2010" name="J. Bacteriol.">
        <title>Genome sequence of the dioxin-mineralizing bacterium Sphingomonas wittichii RW1.</title>
        <authorList>
            <person name="Miller T.R."/>
            <person name="Delcher A.L."/>
            <person name="Salzberg S.L."/>
            <person name="Saunders E."/>
            <person name="Detter J.C."/>
            <person name="Halden R.U."/>
        </authorList>
    </citation>
    <scope>NUCLEOTIDE SEQUENCE [LARGE SCALE GENOMIC DNA]</scope>
    <source>
        <strain>DSM 6014 / CCUG 31198 / JCM 15750 / NBRC 105917 / EY 4224 / RW1</strain>
    </source>
</reference>
<dbReference type="EC" id="3.1.3.5" evidence="1"/>
<dbReference type="EMBL" id="CP000699">
    <property type="protein sequence ID" value="ABQ67006.1"/>
    <property type="molecule type" value="Genomic_DNA"/>
</dbReference>
<dbReference type="SMR" id="A5V3Z0"/>
<dbReference type="STRING" id="392499.Swit_0638"/>
<dbReference type="PaxDb" id="392499-Swit_0638"/>
<dbReference type="KEGG" id="swi:Swit_0638"/>
<dbReference type="eggNOG" id="COG0496">
    <property type="taxonomic scope" value="Bacteria"/>
</dbReference>
<dbReference type="HOGENOM" id="CLU_045192_1_2_5"/>
<dbReference type="OrthoDB" id="9780815at2"/>
<dbReference type="Proteomes" id="UP000001989">
    <property type="component" value="Chromosome"/>
</dbReference>
<dbReference type="GO" id="GO:0005737">
    <property type="term" value="C:cytoplasm"/>
    <property type="evidence" value="ECO:0007669"/>
    <property type="project" value="UniProtKB-SubCell"/>
</dbReference>
<dbReference type="GO" id="GO:0008254">
    <property type="term" value="F:3'-nucleotidase activity"/>
    <property type="evidence" value="ECO:0007669"/>
    <property type="project" value="TreeGrafter"/>
</dbReference>
<dbReference type="GO" id="GO:0008253">
    <property type="term" value="F:5'-nucleotidase activity"/>
    <property type="evidence" value="ECO:0007669"/>
    <property type="project" value="UniProtKB-UniRule"/>
</dbReference>
<dbReference type="GO" id="GO:0004309">
    <property type="term" value="F:exopolyphosphatase activity"/>
    <property type="evidence" value="ECO:0007669"/>
    <property type="project" value="TreeGrafter"/>
</dbReference>
<dbReference type="GO" id="GO:0046872">
    <property type="term" value="F:metal ion binding"/>
    <property type="evidence" value="ECO:0007669"/>
    <property type="project" value="UniProtKB-UniRule"/>
</dbReference>
<dbReference type="GO" id="GO:0000166">
    <property type="term" value="F:nucleotide binding"/>
    <property type="evidence" value="ECO:0007669"/>
    <property type="project" value="UniProtKB-KW"/>
</dbReference>
<dbReference type="FunFam" id="3.40.1210.10:FF:000001">
    <property type="entry name" value="5'/3'-nucleotidase SurE"/>
    <property type="match status" value="1"/>
</dbReference>
<dbReference type="Gene3D" id="3.40.1210.10">
    <property type="entry name" value="Survival protein SurE-like phosphatase/nucleotidase"/>
    <property type="match status" value="1"/>
</dbReference>
<dbReference type="HAMAP" id="MF_00060">
    <property type="entry name" value="SurE"/>
    <property type="match status" value="1"/>
</dbReference>
<dbReference type="InterPro" id="IPR030048">
    <property type="entry name" value="SurE"/>
</dbReference>
<dbReference type="InterPro" id="IPR002828">
    <property type="entry name" value="SurE-like_Pase/nucleotidase"/>
</dbReference>
<dbReference type="InterPro" id="IPR036523">
    <property type="entry name" value="SurE-like_sf"/>
</dbReference>
<dbReference type="NCBIfam" id="NF001490">
    <property type="entry name" value="PRK00346.1-4"/>
    <property type="match status" value="1"/>
</dbReference>
<dbReference type="NCBIfam" id="TIGR00087">
    <property type="entry name" value="surE"/>
    <property type="match status" value="1"/>
</dbReference>
<dbReference type="PANTHER" id="PTHR30457">
    <property type="entry name" value="5'-NUCLEOTIDASE SURE"/>
    <property type="match status" value="1"/>
</dbReference>
<dbReference type="PANTHER" id="PTHR30457:SF12">
    <property type="entry name" value="5'_3'-NUCLEOTIDASE SURE"/>
    <property type="match status" value="1"/>
</dbReference>
<dbReference type="Pfam" id="PF01975">
    <property type="entry name" value="SurE"/>
    <property type="match status" value="1"/>
</dbReference>
<dbReference type="SUPFAM" id="SSF64167">
    <property type="entry name" value="SurE-like"/>
    <property type="match status" value="1"/>
</dbReference>
<gene>
    <name evidence="1" type="primary">surE</name>
    <name type="ordered locus">Swit_0638</name>
</gene>
<feature type="chain" id="PRO_1000007791" description="5'-nucleotidase SurE">
    <location>
        <begin position="1"/>
        <end position="254"/>
    </location>
</feature>
<feature type="binding site" evidence="1">
    <location>
        <position position="8"/>
    </location>
    <ligand>
        <name>a divalent metal cation</name>
        <dbReference type="ChEBI" id="CHEBI:60240"/>
    </ligand>
</feature>
<feature type="binding site" evidence="1">
    <location>
        <position position="9"/>
    </location>
    <ligand>
        <name>a divalent metal cation</name>
        <dbReference type="ChEBI" id="CHEBI:60240"/>
    </ligand>
</feature>
<feature type="binding site" evidence="1">
    <location>
        <position position="40"/>
    </location>
    <ligand>
        <name>a divalent metal cation</name>
        <dbReference type="ChEBI" id="CHEBI:60240"/>
    </ligand>
</feature>
<feature type="binding site" evidence="1">
    <location>
        <position position="93"/>
    </location>
    <ligand>
        <name>a divalent metal cation</name>
        <dbReference type="ChEBI" id="CHEBI:60240"/>
    </ligand>
</feature>
<sequence length="254" mass="27159">MRILLTNDDGIHAPGMAVLERIARALSDDITIVAPNSERSGAGRSLTLTRPLRLRQLGEKRFAVAGTPTDAVMMALARVMKDAPPELILSGVNRGANLGEDVSYSGTVSAAMEGALAGIPSIALSQVYAREGAGLNVSFAAAEAWGAKVLRPLLDAPWAPRSLYNVNFPAREPEQVLGIRVVPQGLRDYGQTEILQRTDPRGFDYYWIKLAGMPSTPAHSTDLEAAADGWVTVTPLHCDMTNHAALAATTALYR</sequence>
<organism>
    <name type="scientific">Rhizorhabdus wittichii (strain DSM 6014 / CCUG 31198 / JCM 15750 / NBRC 105917 / EY 4224 / RW1)</name>
    <name type="common">Sphingomonas wittichii</name>
    <dbReference type="NCBI Taxonomy" id="392499"/>
    <lineage>
        <taxon>Bacteria</taxon>
        <taxon>Pseudomonadati</taxon>
        <taxon>Pseudomonadota</taxon>
        <taxon>Alphaproteobacteria</taxon>
        <taxon>Sphingomonadales</taxon>
        <taxon>Sphingomonadaceae</taxon>
        <taxon>Rhizorhabdus</taxon>
    </lineage>
</organism>
<keyword id="KW-0963">Cytoplasm</keyword>
<keyword id="KW-0378">Hydrolase</keyword>
<keyword id="KW-0479">Metal-binding</keyword>
<keyword id="KW-0547">Nucleotide-binding</keyword>
<keyword id="KW-1185">Reference proteome</keyword>
<protein>
    <recommendedName>
        <fullName evidence="1">5'-nucleotidase SurE</fullName>
        <ecNumber evidence="1">3.1.3.5</ecNumber>
    </recommendedName>
    <alternativeName>
        <fullName evidence="1">Nucleoside 5'-monophosphate phosphohydrolase</fullName>
    </alternativeName>
</protein>
<evidence type="ECO:0000255" key="1">
    <source>
        <dbReference type="HAMAP-Rule" id="MF_00060"/>
    </source>
</evidence>
<accession>A5V3Z0</accession>